<comment type="function">
    <text evidence="3 6">Transcriptional regulator; part of the ergochrome gene cluster responsible for the typical purple-black color of the ergot sclerotia (Probable). The ergochrome gene cluster produces several ergot pigments including the yellow ergochrome secalonic acid and its derivatives, as well as the red anthraquinones endocrocin and clavorubin (PubMed:28955461).</text>
</comment>
<comment type="subcellular location">
    <subcellularLocation>
        <location evidence="1">Nucleus</location>
    </subcellularLocation>
</comment>
<comment type="sequence caution" evidence="5">
    <conflict type="erroneous gene model prediction">
        <sequence resource="EMBL-CDS" id="CCE31568"/>
    </conflict>
</comment>
<name>PIG20_CLAP2</name>
<reference key="1">
    <citation type="journal article" date="2013" name="PLoS Genet.">
        <title>Plant-symbiotic fungi as chemical engineers: Multi-genome analysis of the Clavicipitaceae reveals dynamics of alkaloid loci.</title>
        <authorList>
            <person name="Schardl C.L."/>
            <person name="Young C.A."/>
            <person name="Hesse U."/>
            <person name="Amyotte S.G."/>
            <person name="Andreeva K."/>
            <person name="Calie P.J."/>
            <person name="Fleetwood D.J."/>
            <person name="Haws D.C."/>
            <person name="Moore N."/>
            <person name="Oeser B."/>
            <person name="Panaccione D.G."/>
            <person name="Schweri K.K."/>
            <person name="Voisey C.R."/>
            <person name="Farman M.L."/>
            <person name="Jaromczyk J.W."/>
            <person name="Roe B.A."/>
            <person name="O'Sullivan D.M."/>
            <person name="Scott B."/>
            <person name="Tudzynski P."/>
            <person name="An Z."/>
            <person name="Arnaoudova E.G."/>
            <person name="Bullock C.T."/>
            <person name="Charlton N.D."/>
            <person name="Chen L."/>
            <person name="Cox M."/>
            <person name="Dinkins R.D."/>
            <person name="Florea S."/>
            <person name="Glenn A.E."/>
            <person name="Gordon A."/>
            <person name="Gueldener U."/>
            <person name="Harris D.R."/>
            <person name="Hollin W."/>
            <person name="Jaromczyk J."/>
            <person name="Johnson R.D."/>
            <person name="Khan A.K."/>
            <person name="Leistner E."/>
            <person name="Leuchtmann A."/>
            <person name="Li C."/>
            <person name="Liu J."/>
            <person name="Liu J."/>
            <person name="Liu M."/>
            <person name="Mace W."/>
            <person name="Machado C."/>
            <person name="Nagabhyru P."/>
            <person name="Pan J."/>
            <person name="Schmid J."/>
            <person name="Sugawara K."/>
            <person name="Steiner U."/>
            <person name="Takach J.E."/>
            <person name="Tanaka E."/>
            <person name="Webb J.S."/>
            <person name="Wilson E.V."/>
            <person name="Wiseman J.L."/>
            <person name="Yoshida R."/>
            <person name="Zeng Z."/>
        </authorList>
    </citation>
    <scope>NUCLEOTIDE SEQUENCE [LARGE SCALE GENOMIC DNA]</scope>
    <source>
        <strain>20.1</strain>
    </source>
</reference>
<reference key="2">
    <citation type="journal article" date="2016" name="Fungal Biol. Biotechnol.">
        <title>Identification and characterization of the ergochrome gene cluster in the plant pathogenic fungus Claviceps purpurea.</title>
        <authorList>
            <person name="Neubauer L."/>
            <person name="Dopstadt J."/>
            <person name="Humpf H.U."/>
            <person name="Tudzynski P."/>
        </authorList>
    </citation>
    <scope>FUNCTION</scope>
</reference>
<reference key="3">
    <citation type="journal article" date="2019" name="Chem. Sci.">
        <title>Structure revision of cryptosporioptides and determination of the genetic basis for dimeric xanthone biosynthesis in fungi.</title>
        <authorList>
            <person name="Greco C."/>
            <person name="de Mattos-Shipley K."/>
            <person name="Bailey A.M."/>
            <person name="Mulholland N.P."/>
            <person name="Vincent J.L."/>
            <person name="Willis C.L."/>
            <person name="Cox R.J."/>
            <person name="Simpson T.J."/>
        </authorList>
    </citation>
    <scope>IDENTIFICATION</scope>
    <scope>FUNCTION</scope>
</reference>
<evidence type="ECO:0000255" key="1">
    <source>
        <dbReference type="PROSITE-ProRule" id="PRU00227"/>
    </source>
</evidence>
<evidence type="ECO:0000256" key="2">
    <source>
        <dbReference type="SAM" id="MobiDB-lite"/>
    </source>
</evidence>
<evidence type="ECO:0000269" key="3">
    <source>
    </source>
</evidence>
<evidence type="ECO:0000303" key="4">
    <source>
    </source>
</evidence>
<evidence type="ECO:0000305" key="5"/>
<evidence type="ECO:0000305" key="6">
    <source>
    </source>
</evidence>
<sequence>MVAPHESQRVADSCSHLVGREIGCSRDLAGCRRCTSEGRACSYSRSGVIHRTRRRNRANQDVTRSALYSSNTTPQTISDQATGRPCEGADNTETAYDRLQQIIPSRSHQSVRVIAELLEEYTEAWQGSEAFEKLSKAPIAEFFVFSEPQTRCWLDNLNLILEKEELLIFTIPPEVYAQLASSRPQEVQDRSWLVMFYSVAIYVEHSKAQNTHRVATLSKLRRNLWLAFNDVRLLIEPSPARIQALIILATYVEEFMTPCVCWSLITKACTMLQALGIVHWRLDTATSDVRAMLFWRLNMLDKALALILCRAPAFHREMSSQIAMPTLNRLMQCRPKRTKDYPPALFEAHYLHQMHLVSCIMADVWHALYGQDTEKVQEVKERLEAWYRQAKEVIEAAALVERPLLTAKGAAAVDLGRQTLRFQYLSLVVLLTVSSRQLRSQSIGPSQEMLNLLSALGDAIPDHKGPYACLLWQYLHCPLAAFGALWGELVMKTTANPEQSLKSMEAIAHLPLYLGKLGSRHALAARLQSITARIVEQARMIVNSQEAPEALPVQDEPTNPGLPAPAAEILPIVAPNESLDPTQMQPVDDFLDDRFIMQSDPFFGTTFDWFAWGGNLEV</sequence>
<gene>
    <name type="ORF">CPUR_05421</name>
</gene>
<protein>
    <recommendedName>
        <fullName evidence="4">Transcriptional regulator CPUR_05421</fullName>
    </recommendedName>
    <alternativeName>
        <fullName evidence="4">Ergochrome biosynthesis cluster protein CPUR_05421</fullName>
    </alternativeName>
</protein>
<organism>
    <name type="scientific">Claviceps purpurea (strain 20.1)</name>
    <name type="common">Ergot fungus</name>
    <name type="synonym">Sphacelia segetum</name>
    <dbReference type="NCBI Taxonomy" id="1111077"/>
    <lineage>
        <taxon>Eukaryota</taxon>
        <taxon>Fungi</taxon>
        <taxon>Dikarya</taxon>
        <taxon>Ascomycota</taxon>
        <taxon>Pezizomycotina</taxon>
        <taxon>Sordariomycetes</taxon>
        <taxon>Hypocreomycetidae</taxon>
        <taxon>Hypocreales</taxon>
        <taxon>Clavicipitaceae</taxon>
        <taxon>Claviceps</taxon>
    </lineage>
</organism>
<accession>M1WCE9</accession>
<proteinExistence type="inferred from homology"/>
<feature type="chain" id="PRO_0000453510" description="Transcriptional regulator CPUR_05421">
    <location>
        <begin position="1"/>
        <end position="618"/>
    </location>
</feature>
<feature type="DNA-binding region" description="Zn(2)-C6 fungal-type" evidence="1">
    <location>
        <begin position="14"/>
        <end position="41"/>
    </location>
</feature>
<feature type="region of interest" description="Disordered" evidence="2">
    <location>
        <begin position="52"/>
        <end position="87"/>
    </location>
</feature>
<feature type="compositionally biased region" description="Polar residues" evidence="2">
    <location>
        <begin position="59"/>
        <end position="81"/>
    </location>
</feature>
<keyword id="KW-0238">DNA-binding</keyword>
<keyword id="KW-0479">Metal-binding</keyword>
<keyword id="KW-0539">Nucleus</keyword>
<keyword id="KW-1185">Reference proteome</keyword>
<keyword id="KW-0804">Transcription</keyword>
<keyword id="KW-0805">Transcription regulation</keyword>
<dbReference type="EMBL" id="CAGA01000032">
    <property type="protein sequence ID" value="CCE31568.1"/>
    <property type="status" value="ALT_SEQ"/>
    <property type="molecule type" value="Genomic_DNA"/>
</dbReference>
<dbReference type="STRING" id="1111077.M1WCE9"/>
<dbReference type="VEuPathDB" id="FungiDB:CPUR_05421"/>
<dbReference type="eggNOG" id="ENOG502SKTR">
    <property type="taxonomic scope" value="Eukaryota"/>
</dbReference>
<dbReference type="HOGENOM" id="CLU_516777_0_0_1"/>
<dbReference type="OrthoDB" id="103819at2759"/>
<dbReference type="PhylomeDB" id="M1WCE9"/>
<dbReference type="Proteomes" id="UP000016801">
    <property type="component" value="Unassembled WGS sequence"/>
</dbReference>
<dbReference type="GO" id="GO:0005634">
    <property type="term" value="C:nucleus"/>
    <property type="evidence" value="ECO:0007669"/>
    <property type="project" value="UniProtKB-SubCell"/>
</dbReference>
<dbReference type="GO" id="GO:0003677">
    <property type="term" value="F:DNA binding"/>
    <property type="evidence" value="ECO:0007669"/>
    <property type="project" value="UniProtKB-KW"/>
</dbReference>
<dbReference type="GO" id="GO:0003700">
    <property type="term" value="F:DNA-binding transcription factor activity"/>
    <property type="evidence" value="ECO:0007669"/>
    <property type="project" value="InterPro"/>
</dbReference>
<dbReference type="GO" id="GO:0046872">
    <property type="term" value="F:metal ion binding"/>
    <property type="evidence" value="ECO:0007669"/>
    <property type="project" value="UniProtKB-KW"/>
</dbReference>
<dbReference type="CDD" id="cd12148">
    <property type="entry name" value="fungal_TF_MHR"/>
    <property type="match status" value="1"/>
</dbReference>
<dbReference type="InterPro" id="IPR050987">
    <property type="entry name" value="AtrR-like"/>
</dbReference>
<dbReference type="PANTHER" id="PTHR46910">
    <property type="entry name" value="TRANSCRIPTION FACTOR PDR1"/>
    <property type="match status" value="1"/>
</dbReference>
<dbReference type="PANTHER" id="PTHR46910:SF5">
    <property type="entry name" value="ZN(II)2CYS6 TRANSCRIPTION FACTOR (EUROFUNG)"/>
    <property type="match status" value="1"/>
</dbReference>